<accession>Q2NRM0</accession>
<organism>
    <name type="scientific">Sodalis glossinidius (strain morsitans)</name>
    <dbReference type="NCBI Taxonomy" id="343509"/>
    <lineage>
        <taxon>Bacteria</taxon>
        <taxon>Pseudomonadati</taxon>
        <taxon>Pseudomonadota</taxon>
        <taxon>Gammaproteobacteria</taxon>
        <taxon>Enterobacterales</taxon>
        <taxon>Bruguierivoracaceae</taxon>
        <taxon>Sodalis</taxon>
    </lineage>
</organism>
<evidence type="ECO:0000255" key="1">
    <source>
        <dbReference type="HAMAP-Rule" id="MF_00392"/>
    </source>
</evidence>
<keyword id="KW-0328">Glycosyltransferase</keyword>
<keyword id="KW-0441">Lipid A biosynthesis</keyword>
<keyword id="KW-0444">Lipid biosynthesis</keyword>
<keyword id="KW-0443">Lipid metabolism</keyword>
<keyword id="KW-0808">Transferase</keyword>
<dbReference type="EC" id="2.4.1.182" evidence="1"/>
<dbReference type="EMBL" id="AP008232">
    <property type="protein sequence ID" value="BAE75205.1"/>
    <property type="molecule type" value="Genomic_DNA"/>
</dbReference>
<dbReference type="RefSeq" id="WP_011411661.1">
    <property type="nucleotide sequence ID" value="NC_007712.1"/>
</dbReference>
<dbReference type="SMR" id="Q2NRM0"/>
<dbReference type="STRING" id="343509.SG1930"/>
<dbReference type="CAZy" id="GT19">
    <property type="family name" value="Glycosyltransferase Family 19"/>
</dbReference>
<dbReference type="KEGG" id="sgl:SG1930"/>
<dbReference type="eggNOG" id="COG0763">
    <property type="taxonomic scope" value="Bacteria"/>
</dbReference>
<dbReference type="HOGENOM" id="CLU_036577_3_0_6"/>
<dbReference type="OrthoDB" id="9801642at2"/>
<dbReference type="BioCyc" id="SGLO343509:SGP1_RS17775-MONOMER"/>
<dbReference type="UniPathway" id="UPA00359">
    <property type="reaction ID" value="UER00481"/>
</dbReference>
<dbReference type="Proteomes" id="UP000001932">
    <property type="component" value="Chromosome"/>
</dbReference>
<dbReference type="GO" id="GO:0016020">
    <property type="term" value="C:membrane"/>
    <property type="evidence" value="ECO:0007669"/>
    <property type="project" value="GOC"/>
</dbReference>
<dbReference type="GO" id="GO:0008915">
    <property type="term" value="F:lipid-A-disaccharide synthase activity"/>
    <property type="evidence" value="ECO:0007669"/>
    <property type="project" value="UniProtKB-UniRule"/>
</dbReference>
<dbReference type="GO" id="GO:0005543">
    <property type="term" value="F:phospholipid binding"/>
    <property type="evidence" value="ECO:0007669"/>
    <property type="project" value="TreeGrafter"/>
</dbReference>
<dbReference type="GO" id="GO:0009245">
    <property type="term" value="P:lipid A biosynthetic process"/>
    <property type="evidence" value="ECO:0007669"/>
    <property type="project" value="UniProtKB-UniRule"/>
</dbReference>
<dbReference type="HAMAP" id="MF_00392">
    <property type="entry name" value="LpxB"/>
    <property type="match status" value="1"/>
</dbReference>
<dbReference type="InterPro" id="IPR003835">
    <property type="entry name" value="Glyco_trans_19"/>
</dbReference>
<dbReference type="NCBIfam" id="TIGR00215">
    <property type="entry name" value="lpxB"/>
    <property type="match status" value="1"/>
</dbReference>
<dbReference type="PANTHER" id="PTHR30372">
    <property type="entry name" value="LIPID-A-DISACCHARIDE SYNTHASE"/>
    <property type="match status" value="1"/>
</dbReference>
<dbReference type="PANTHER" id="PTHR30372:SF4">
    <property type="entry name" value="LIPID-A-DISACCHARIDE SYNTHASE, MITOCHONDRIAL-RELATED"/>
    <property type="match status" value="1"/>
</dbReference>
<dbReference type="Pfam" id="PF02684">
    <property type="entry name" value="LpxB"/>
    <property type="match status" value="1"/>
</dbReference>
<dbReference type="SUPFAM" id="SSF53756">
    <property type="entry name" value="UDP-Glycosyltransferase/glycogen phosphorylase"/>
    <property type="match status" value="1"/>
</dbReference>
<sequence>MSARPITIGLVAGETSGDILGAGLIRALRGHLPEARFVGVAGPRMQAEGMEAWYDMEELAVMGIVEVVERLPRLLRIRRDLTRRFTALRPDVFVGIDAPDFTITLEGRLKRRGIRTIHYVSPSVWAWRQKRVFKIGRATDNVLAFLPFEKAFYDCYNVPCQFIGHTLADAMSLDPDKAAARQALGIAAEARCLALLPGSRQSEVAMLSADFLRAAERLYECFPGLEIVVPLVNPARRAQFEHILVAVAPALPVRLLDNQARQAMIAADAALLASGTASLECMLAKCPMVVGYRMKPLTFALARRLVKTPWVSLPNLLAGRELVKELLQEACQPEALAAALEPLLDDDDQRAALLAMFRQLHQQIRCNADEQAARAVLALINR</sequence>
<name>LPXB_SODGM</name>
<protein>
    <recommendedName>
        <fullName evidence="1">Lipid-A-disaccharide synthase</fullName>
        <ecNumber evidence="1">2.4.1.182</ecNumber>
    </recommendedName>
</protein>
<reference key="1">
    <citation type="journal article" date="2006" name="Genome Res.">
        <title>Massive genome erosion and functional adaptations provide insights into the symbiotic lifestyle of Sodalis glossinidius in the tsetse host.</title>
        <authorList>
            <person name="Toh H."/>
            <person name="Weiss B.L."/>
            <person name="Perkin S.A.H."/>
            <person name="Yamashita A."/>
            <person name="Oshima K."/>
            <person name="Hattori M."/>
            <person name="Aksoy S."/>
        </authorList>
    </citation>
    <scope>NUCLEOTIDE SEQUENCE [LARGE SCALE GENOMIC DNA]</scope>
    <source>
        <strain>morsitans</strain>
    </source>
</reference>
<comment type="function">
    <text evidence="1">Condensation of UDP-2,3-diacylglucosamine and 2,3-diacylglucosamine-1-phosphate to form lipid A disaccharide, a precursor of lipid A, a phosphorylated glycolipid that anchors the lipopolysaccharide to the outer membrane of the cell.</text>
</comment>
<comment type="catalytic activity">
    <reaction evidence="1">
        <text>2-N,3-O-bis[(3R)-3-hydroxytetradecanoyl]-alpha-D-glucosaminyl 1-phosphate + UDP-2-N,3-O-bis[(3R)-3-hydroxytetradecanoyl]-alpha-D-glucosamine = lipid A disaccharide (E. coli) + UDP + H(+)</text>
        <dbReference type="Rhea" id="RHEA:22668"/>
        <dbReference type="ChEBI" id="CHEBI:15378"/>
        <dbReference type="ChEBI" id="CHEBI:57957"/>
        <dbReference type="ChEBI" id="CHEBI:58223"/>
        <dbReference type="ChEBI" id="CHEBI:58466"/>
        <dbReference type="ChEBI" id="CHEBI:78847"/>
    </reaction>
</comment>
<comment type="catalytic activity">
    <reaction evidence="1">
        <text>a lipid X + a UDP-2-N,3-O-bis[(3R)-3-hydroxyacyl]-alpha-D-glucosamine = a lipid A disaccharide + UDP + H(+)</text>
        <dbReference type="Rhea" id="RHEA:67828"/>
        <dbReference type="ChEBI" id="CHEBI:15378"/>
        <dbReference type="ChEBI" id="CHEBI:58223"/>
        <dbReference type="ChEBI" id="CHEBI:137748"/>
        <dbReference type="ChEBI" id="CHEBI:176338"/>
        <dbReference type="ChEBI" id="CHEBI:176343"/>
        <dbReference type="EC" id="2.4.1.182"/>
    </reaction>
</comment>
<comment type="pathway">
    <text evidence="1">Glycolipid biosynthesis; lipid IV(A) biosynthesis; lipid IV(A) from (3R)-3-hydroxytetradecanoyl-[acyl-carrier-protein] and UDP-N-acetyl-alpha-D-glucosamine: step 5/6.</text>
</comment>
<comment type="similarity">
    <text evidence="1">Belongs to the LpxB family.</text>
</comment>
<proteinExistence type="inferred from homology"/>
<feature type="chain" id="PRO_0000255227" description="Lipid-A-disaccharide synthase">
    <location>
        <begin position="1"/>
        <end position="382"/>
    </location>
</feature>
<gene>
    <name evidence="1" type="primary">lpxB</name>
    <name type="ordered locus">SG1930</name>
</gene>